<accession>A9W963</accession>
<name>RL19_METEP</name>
<sequence length="134" mass="15058">MNIIEQLEREEVARLAKTIPDFEPGDTVIVNVRVKEGERTRVQAYEGVCIARNGGGLNESFTVRKISYGEGVERVFPVHSPMIDSIKVVRRGKVRRAKLYYLRDRRGKSARIVERSDRSDKAKAQKAAAATAAE</sequence>
<proteinExistence type="inferred from homology"/>
<comment type="function">
    <text evidence="1">This protein is located at the 30S-50S ribosomal subunit interface and may play a role in the structure and function of the aminoacyl-tRNA binding site.</text>
</comment>
<comment type="similarity">
    <text evidence="1">Belongs to the bacterial ribosomal protein bL19 family.</text>
</comment>
<feature type="chain" id="PRO_1000193862" description="Large ribosomal subunit protein bL19">
    <location>
        <begin position="1"/>
        <end position="134"/>
    </location>
</feature>
<feature type="region of interest" description="Disordered" evidence="2">
    <location>
        <begin position="108"/>
        <end position="134"/>
    </location>
</feature>
<feature type="compositionally biased region" description="Basic and acidic residues" evidence="2">
    <location>
        <begin position="111"/>
        <end position="123"/>
    </location>
</feature>
<feature type="compositionally biased region" description="Low complexity" evidence="2">
    <location>
        <begin position="125"/>
        <end position="134"/>
    </location>
</feature>
<dbReference type="EMBL" id="CP000908">
    <property type="protein sequence ID" value="ABY33102.1"/>
    <property type="molecule type" value="Genomic_DNA"/>
</dbReference>
<dbReference type="RefSeq" id="WP_003603692.1">
    <property type="nucleotide sequence ID" value="NC_010172.1"/>
</dbReference>
<dbReference type="SMR" id="A9W963"/>
<dbReference type="GeneID" id="72992466"/>
<dbReference type="KEGG" id="mex:Mext_4734"/>
<dbReference type="eggNOG" id="COG0335">
    <property type="taxonomic scope" value="Bacteria"/>
</dbReference>
<dbReference type="HOGENOM" id="CLU_103507_2_1_5"/>
<dbReference type="BioCyc" id="MEXT419610:MEXT_RS23790-MONOMER"/>
<dbReference type="GO" id="GO:0022625">
    <property type="term" value="C:cytosolic large ribosomal subunit"/>
    <property type="evidence" value="ECO:0007669"/>
    <property type="project" value="TreeGrafter"/>
</dbReference>
<dbReference type="GO" id="GO:0003735">
    <property type="term" value="F:structural constituent of ribosome"/>
    <property type="evidence" value="ECO:0007669"/>
    <property type="project" value="InterPro"/>
</dbReference>
<dbReference type="GO" id="GO:0006412">
    <property type="term" value="P:translation"/>
    <property type="evidence" value="ECO:0007669"/>
    <property type="project" value="UniProtKB-UniRule"/>
</dbReference>
<dbReference type="FunFam" id="2.30.30.790:FF:000001">
    <property type="entry name" value="50S ribosomal protein L19"/>
    <property type="match status" value="1"/>
</dbReference>
<dbReference type="Gene3D" id="2.30.30.790">
    <property type="match status" value="1"/>
</dbReference>
<dbReference type="HAMAP" id="MF_00402">
    <property type="entry name" value="Ribosomal_bL19"/>
    <property type="match status" value="1"/>
</dbReference>
<dbReference type="InterPro" id="IPR001857">
    <property type="entry name" value="Ribosomal_bL19"/>
</dbReference>
<dbReference type="InterPro" id="IPR018257">
    <property type="entry name" value="Ribosomal_bL19_CS"/>
</dbReference>
<dbReference type="InterPro" id="IPR038657">
    <property type="entry name" value="Ribosomal_bL19_sf"/>
</dbReference>
<dbReference type="InterPro" id="IPR008991">
    <property type="entry name" value="Translation_prot_SH3-like_sf"/>
</dbReference>
<dbReference type="NCBIfam" id="TIGR01024">
    <property type="entry name" value="rplS_bact"/>
    <property type="match status" value="1"/>
</dbReference>
<dbReference type="PANTHER" id="PTHR15680:SF9">
    <property type="entry name" value="LARGE RIBOSOMAL SUBUNIT PROTEIN BL19M"/>
    <property type="match status" value="1"/>
</dbReference>
<dbReference type="PANTHER" id="PTHR15680">
    <property type="entry name" value="RIBOSOMAL PROTEIN L19"/>
    <property type="match status" value="1"/>
</dbReference>
<dbReference type="Pfam" id="PF01245">
    <property type="entry name" value="Ribosomal_L19"/>
    <property type="match status" value="1"/>
</dbReference>
<dbReference type="PIRSF" id="PIRSF002191">
    <property type="entry name" value="Ribosomal_L19"/>
    <property type="match status" value="1"/>
</dbReference>
<dbReference type="PRINTS" id="PR00061">
    <property type="entry name" value="RIBOSOMALL19"/>
</dbReference>
<dbReference type="SUPFAM" id="SSF50104">
    <property type="entry name" value="Translation proteins SH3-like domain"/>
    <property type="match status" value="1"/>
</dbReference>
<dbReference type="PROSITE" id="PS01015">
    <property type="entry name" value="RIBOSOMAL_L19"/>
    <property type="match status" value="1"/>
</dbReference>
<organism>
    <name type="scientific">Methylorubrum extorquens (strain PA1)</name>
    <name type="common">Methylobacterium extorquens</name>
    <dbReference type="NCBI Taxonomy" id="419610"/>
    <lineage>
        <taxon>Bacteria</taxon>
        <taxon>Pseudomonadati</taxon>
        <taxon>Pseudomonadota</taxon>
        <taxon>Alphaproteobacteria</taxon>
        <taxon>Hyphomicrobiales</taxon>
        <taxon>Methylobacteriaceae</taxon>
        <taxon>Methylorubrum</taxon>
    </lineage>
</organism>
<protein>
    <recommendedName>
        <fullName evidence="1">Large ribosomal subunit protein bL19</fullName>
    </recommendedName>
    <alternativeName>
        <fullName evidence="3">50S ribosomal protein L19</fullName>
    </alternativeName>
</protein>
<evidence type="ECO:0000255" key="1">
    <source>
        <dbReference type="HAMAP-Rule" id="MF_00402"/>
    </source>
</evidence>
<evidence type="ECO:0000256" key="2">
    <source>
        <dbReference type="SAM" id="MobiDB-lite"/>
    </source>
</evidence>
<evidence type="ECO:0000305" key="3"/>
<keyword id="KW-0687">Ribonucleoprotein</keyword>
<keyword id="KW-0689">Ribosomal protein</keyword>
<reference key="1">
    <citation type="submission" date="2007-12" db="EMBL/GenBank/DDBJ databases">
        <title>Complete sequence of Methylobacterium extorquens PA1.</title>
        <authorList>
            <consortium name="US DOE Joint Genome Institute"/>
            <person name="Copeland A."/>
            <person name="Lucas S."/>
            <person name="Lapidus A."/>
            <person name="Barry K."/>
            <person name="Glavina del Rio T."/>
            <person name="Dalin E."/>
            <person name="Tice H."/>
            <person name="Pitluck S."/>
            <person name="Saunders E."/>
            <person name="Brettin T."/>
            <person name="Bruce D."/>
            <person name="Detter J.C."/>
            <person name="Han C."/>
            <person name="Schmutz J."/>
            <person name="Larimer F."/>
            <person name="Land M."/>
            <person name="Hauser L."/>
            <person name="Kyrpides N."/>
            <person name="Kim E."/>
            <person name="Marx C."/>
            <person name="Richardson P."/>
        </authorList>
    </citation>
    <scope>NUCLEOTIDE SEQUENCE [LARGE SCALE GENOMIC DNA]</scope>
    <source>
        <strain>PA1</strain>
    </source>
</reference>
<gene>
    <name evidence="1" type="primary">rplS</name>
    <name type="ordered locus">Mext_4734</name>
</gene>